<keyword id="KW-0963">Cytoplasm</keyword>
<keyword id="KW-0441">Lipid A biosynthesis</keyword>
<keyword id="KW-0444">Lipid biosynthesis</keyword>
<keyword id="KW-0443">Lipid metabolism</keyword>
<keyword id="KW-0456">Lyase</keyword>
<organism>
    <name type="scientific">Bordetella petrii (strain ATCC BAA-461 / DSM 12804 / CCUG 43448)</name>
    <dbReference type="NCBI Taxonomy" id="340100"/>
    <lineage>
        <taxon>Bacteria</taxon>
        <taxon>Pseudomonadati</taxon>
        <taxon>Pseudomonadota</taxon>
        <taxon>Betaproteobacteria</taxon>
        <taxon>Burkholderiales</taxon>
        <taxon>Alcaligenaceae</taxon>
        <taxon>Bordetella</taxon>
    </lineage>
</organism>
<comment type="function">
    <text evidence="1">Involved in unsaturated fatty acids biosynthesis. Catalyzes the dehydration of short chain beta-hydroxyacyl-ACPs and long chain saturated and unsaturated beta-hydroxyacyl-ACPs.</text>
</comment>
<comment type="catalytic activity">
    <reaction evidence="1">
        <text>a (3R)-hydroxyacyl-[ACP] = a (2E)-enoyl-[ACP] + H2O</text>
        <dbReference type="Rhea" id="RHEA:13097"/>
        <dbReference type="Rhea" id="RHEA-COMP:9925"/>
        <dbReference type="Rhea" id="RHEA-COMP:9945"/>
        <dbReference type="ChEBI" id="CHEBI:15377"/>
        <dbReference type="ChEBI" id="CHEBI:78784"/>
        <dbReference type="ChEBI" id="CHEBI:78827"/>
        <dbReference type="EC" id="4.2.1.59"/>
    </reaction>
</comment>
<comment type="subcellular location">
    <subcellularLocation>
        <location evidence="1">Cytoplasm</location>
    </subcellularLocation>
</comment>
<comment type="similarity">
    <text evidence="1">Belongs to the thioester dehydratase family. FabZ subfamily.</text>
</comment>
<proteinExistence type="inferred from homology"/>
<name>FABZ_BORPD</name>
<reference key="1">
    <citation type="journal article" date="2008" name="BMC Genomics">
        <title>The missing link: Bordetella petrii is endowed with both the metabolic versatility of environmental bacteria and virulence traits of pathogenic Bordetellae.</title>
        <authorList>
            <person name="Gross R."/>
            <person name="Guzman C.A."/>
            <person name="Sebaihia M."/>
            <person name="Martin dos Santos V.A.P."/>
            <person name="Pieper D.H."/>
            <person name="Koebnik R."/>
            <person name="Lechner M."/>
            <person name="Bartels D."/>
            <person name="Buhrmester J."/>
            <person name="Choudhuri J.V."/>
            <person name="Ebensen T."/>
            <person name="Gaigalat L."/>
            <person name="Herrmann S."/>
            <person name="Khachane A.N."/>
            <person name="Larisch C."/>
            <person name="Link S."/>
            <person name="Linke B."/>
            <person name="Meyer F."/>
            <person name="Mormann S."/>
            <person name="Nakunst D."/>
            <person name="Rueckert C."/>
            <person name="Schneiker-Bekel S."/>
            <person name="Schulze K."/>
            <person name="Voerholter F.-J."/>
            <person name="Yevsa T."/>
            <person name="Engle J.T."/>
            <person name="Goldman W.E."/>
            <person name="Puehler A."/>
            <person name="Goebel U.B."/>
            <person name="Goesmann A."/>
            <person name="Bloecker H."/>
            <person name="Kaiser O."/>
            <person name="Martinez-Arias R."/>
        </authorList>
    </citation>
    <scope>NUCLEOTIDE SEQUENCE [LARGE SCALE GENOMIC DNA]</scope>
    <source>
        <strain>ATCC BAA-461 / DSM 12804 / CCUG 43448</strain>
    </source>
</reference>
<protein>
    <recommendedName>
        <fullName evidence="1">3-hydroxyacyl-[acyl-carrier-protein] dehydratase FabZ</fullName>
        <ecNumber evidence="1">4.2.1.59</ecNumber>
    </recommendedName>
    <alternativeName>
        <fullName evidence="1">(3R)-hydroxymyristoyl-[acyl-carrier-protein] dehydratase</fullName>
        <shortName evidence="1">(3R)-hydroxymyristoyl-ACP dehydrase</shortName>
    </alternativeName>
    <alternativeName>
        <fullName evidence="1">Beta-hydroxyacyl-ACP dehydratase</fullName>
    </alternativeName>
</protein>
<accession>A9INS6</accession>
<sequence>MELDIKAIMERLPHRYPMLLVDRVLDIVPGKSIVAIKNVSINEPFFEGHFPHHPVMPGVLITEAMAQAAALFSFTDDDGGLKCDSAKTAYYLVGIDEARFRRPVVPGDQLRLEVQAERLSRAICKYQARALVDGQIVAEAKLMCAIRSLEA</sequence>
<dbReference type="EC" id="4.2.1.59" evidence="1"/>
<dbReference type="EMBL" id="AM902716">
    <property type="protein sequence ID" value="CAP42866.1"/>
    <property type="molecule type" value="Genomic_DNA"/>
</dbReference>
<dbReference type="SMR" id="A9INS6"/>
<dbReference type="STRING" id="94624.Bpet2524"/>
<dbReference type="KEGG" id="bpt:Bpet2524"/>
<dbReference type="eggNOG" id="COG0764">
    <property type="taxonomic scope" value="Bacteria"/>
</dbReference>
<dbReference type="Proteomes" id="UP000001225">
    <property type="component" value="Chromosome"/>
</dbReference>
<dbReference type="GO" id="GO:0005737">
    <property type="term" value="C:cytoplasm"/>
    <property type="evidence" value="ECO:0007669"/>
    <property type="project" value="UniProtKB-SubCell"/>
</dbReference>
<dbReference type="GO" id="GO:0016020">
    <property type="term" value="C:membrane"/>
    <property type="evidence" value="ECO:0007669"/>
    <property type="project" value="GOC"/>
</dbReference>
<dbReference type="GO" id="GO:0019171">
    <property type="term" value="F:(3R)-hydroxyacyl-[acyl-carrier-protein] dehydratase activity"/>
    <property type="evidence" value="ECO:0007669"/>
    <property type="project" value="UniProtKB-EC"/>
</dbReference>
<dbReference type="GO" id="GO:0006633">
    <property type="term" value="P:fatty acid biosynthetic process"/>
    <property type="evidence" value="ECO:0007669"/>
    <property type="project" value="UniProtKB-UniRule"/>
</dbReference>
<dbReference type="GO" id="GO:0009245">
    <property type="term" value="P:lipid A biosynthetic process"/>
    <property type="evidence" value="ECO:0007669"/>
    <property type="project" value="UniProtKB-UniRule"/>
</dbReference>
<dbReference type="CDD" id="cd01288">
    <property type="entry name" value="FabZ"/>
    <property type="match status" value="1"/>
</dbReference>
<dbReference type="FunFam" id="3.10.129.10:FF:000001">
    <property type="entry name" value="3-hydroxyacyl-[acyl-carrier-protein] dehydratase FabZ"/>
    <property type="match status" value="1"/>
</dbReference>
<dbReference type="Gene3D" id="3.10.129.10">
    <property type="entry name" value="Hotdog Thioesterase"/>
    <property type="match status" value="1"/>
</dbReference>
<dbReference type="HAMAP" id="MF_00406">
    <property type="entry name" value="FabZ"/>
    <property type="match status" value="1"/>
</dbReference>
<dbReference type="InterPro" id="IPR013114">
    <property type="entry name" value="FabA_FabZ"/>
</dbReference>
<dbReference type="InterPro" id="IPR010084">
    <property type="entry name" value="FabZ"/>
</dbReference>
<dbReference type="InterPro" id="IPR029069">
    <property type="entry name" value="HotDog_dom_sf"/>
</dbReference>
<dbReference type="NCBIfam" id="TIGR01750">
    <property type="entry name" value="fabZ"/>
    <property type="match status" value="1"/>
</dbReference>
<dbReference type="NCBIfam" id="NF000582">
    <property type="entry name" value="PRK00006.1"/>
    <property type="match status" value="1"/>
</dbReference>
<dbReference type="PANTHER" id="PTHR30272">
    <property type="entry name" value="3-HYDROXYACYL-[ACYL-CARRIER-PROTEIN] DEHYDRATASE"/>
    <property type="match status" value="1"/>
</dbReference>
<dbReference type="PANTHER" id="PTHR30272:SF1">
    <property type="entry name" value="3-HYDROXYACYL-[ACYL-CARRIER-PROTEIN] DEHYDRATASE"/>
    <property type="match status" value="1"/>
</dbReference>
<dbReference type="Pfam" id="PF07977">
    <property type="entry name" value="FabA"/>
    <property type="match status" value="1"/>
</dbReference>
<dbReference type="SUPFAM" id="SSF54637">
    <property type="entry name" value="Thioesterase/thiol ester dehydrase-isomerase"/>
    <property type="match status" value="1"/>
</dbReference>
<gene>
    <name evidence="1" type="primary">fabZ</name>
    <name type="ordered locus">Bpet2524</name>
</gene>
<evidence type="ECO:0000255" key="1">
    <source>
        <dbReference type="HAMAP-Rule" id="MF_00406"/>
    </source>
</evidence>
<feature type="chain" id="PRO_1000197279" description="3-hydroxyacyl-[acyl-carrier-protein] dehydratase FabZ">
    <location>
        <begin position="1"/>
        <end position="151"/>
    </location>
</feature>
<feature type="active site" evidence="1">
    <location>
        <position position="49"/>
    </location>
</feature>